<protein>
    <recommendedName>
        <fullName evidence="1">Undecaprenyl phosphate-alpha-4-amino-4-deoxy-L-arabinose arabinosyl transferase</fullName>
        <ecNumber evidence="1">2.4.2.43</ecNumber>
    </recommendedName>
    <alternativeName>
        <fullName evidence="1">4-amino-4-deoxy-L-arabinose lipid A transferase</fullName>
    </alternativeName>
    <alternativeName>
        <fullName evidence="1">Lipid IV(A) 4-amino-4-deoxy-L-arabinosyltransferase</fullName>
    </alternativeName>
    <alternativeName>
        <fullName evidence="1">Undecaprenyl phosphate-alpha-L-Ara4N transferase</fullName>
    </alternativeName>
</protein>
<reference key="1">
    <citation type="journal article" date="2006" name="J. Bacteriol.">
        <title>Genome sequence of Aeromonas hydrophila ATCC 7966T: jack of all trades.</title>
        <authorList>
            <person name="Seshadri R."/>
            <person name="Joseph S.W."/>
            <person name="Chopra A.K."/>
            <person name="Sha J."/>
            <person name="Shaw J."/>
            <person name="Graf J."/>
            <person name="Haft D.H."/>
            <person name="Wu M."/>
            <person name="Ren Q."/>
            <person name="Rosovitz M.J."/>
            <person name="Madupu R."/>
            <person name="Tallon L."/>
            <person name="Kim M."/>
            <person name="Jin S."/>
            <person name="Vuong H."/>
            <person name="Stine O.C."/>
            <person name="Ali A."/>
            <person name="Horneman A.J."/>
            <person name="Heidelberg J.F."/>
        </authorList>
    </citation>
    <scope>NUCLEOTIDE SEQUENCE [LARGE SCALE GENOMIC DNA]</scope>
    <source>
        <strain>ATCC 7966 / DSM 30187 / BCRC 13018 / CCUG 14551 / JCM 1027 / KCTC 2358 / NCIMB 9240 / NCTC 8049</strain>
    </source>
</reference>
<sequence length="547" mass="61172">MTLTKWALPLFFLFFYLLPLDQRPLWSPDENRYAEISREMVSTGDWVVPHFLGLRYFEKPIAGYWFNSISQQLFGDTNFAVRFASAAATGLSALLIFWFALQLWQCRRKAFLASLIYLSLLIVYGIGTYSVLDAMVTLWLNAAMVSFYIIRKEGSLGSRIGGYLLFGLACGMGFLTKGFIALAVPVVVIVPYVIYQRRLLELVRFGPLAILSAVLLAAPWAIAVHLREPDYWHYFFWVEHIQRFAADNAQHKAPFWYYLPMGLLGTLPWLGLLPGALRKGWQERKISPETLYLLAWVILPLLFFSIAKGKLLTYILPCFAPLAMLMAANAVDLLKEGKERAFKVNAWLNGLFGLICLVVLAVLAFSPSHAVYGEEDQGALAVAMVIFAGWSLLGFIQLKEVSRRWTLSALCPMVLAIGLPWALPQSLIDSKLPERFIEANQAVLMKSGTLLANDVGLASSLAWGTQRSEINLFDSKGEVHYGLGYPDAAGRYVARADFPAWLEQARKNGQVALLMKTDRDGNTGPVPTADETIVSHRLTLLIYHGAQ</sequence>
<gene>
    <name evidence="1" type="primary">arnT</name>
    <name type="ordered locus">AHA_0988</name>
</gene>
<accession>A0KGY4</accession>
<name>ARNT_AERHH</name>
<comment type="function">
    <text evidence="1">Catalyzes the transfer of the L-Ara4N moiety of the glycolipid undecaprenyl phosphate-alpha-L-Ara4N to lipid A. The modified arabinose is attached to lipid A and is required for resistance to polymyxin and cationic antimicrobial peptides.</text>
</comment>
<comment type="catalytic activity">
    <reaction evidence="1">
        <text>4-amino-4-deoxy-alpha-L-arabinopyranosyl di-trans,octa-cis-undecaprenyl phosphate + lipid IVA = lipid IIA + di-trans,octa-cis-undecaprenyl phosphate.</text>
        <dbReference type="EC" id="2.4.2.43"/>
    </reaction>
</comment>
<comment type="pathway">
    <text evidence="1">Lipopolysaccharide metabolism; 4-amino-4-deoxy-beta-L-arabinose-lipid A biosynthesis.</text>
</comment>
<comment type="subcellular location">
    <subcellularLocation>
        <location evidence="1">Cell inner membrane</location>
        <topology evidence="1">Multi-pass membrane protein</topology>
    </subcellularLocation>
</comment>
<comment type="similarity">
    <text evidence="1">Belongs to the glycosyltransferase 83 family.</text>
</comment>
<feature type="chain" id="PRO_0000379992" description="Undecaprenyl phosphate-alpha-4-amino-4-deoxy-L-arabinose arabinosyl transferase">
    <location>
        <begin position="1"/>
        <end position="547"/>
    </location>
</feature>
<feature type="transmembrane region" description="Helical" evidence="1">
    <location>
        <begin position="83"/>
        <end position="103"/>
    </location>
</feature>
<feature type="transmembrane region" description="Helical" evidence="1">
    <location>
        <begin position="111"/>
        <end position="131"/>
    </location>
</feature>
<feature type="transmembrane region" description="Helical" evidence="1">
    <location>
        <begin position="174"/>
        <end position="194"/>
    </location>
</feature>
<feature type="transmembrane region" description="Helical" evidence="1">
    <location>
        <begin position="205"/>
        <end position="225"/>
    </location>
</feature>
<feature type="transmembrane region" description="Helical" evidence="1">
    <location>
        <begin position="253"/>
        <end position="273"/>
    </location>
</feature>
<feature type="transmembrane region" description="Helical" evidence="1">
    <location>
        <begin position="286"/>
        <end position="306"/>
    </location>
</feature>
<feature type="transmembrane region" description="Helical" evidence="1">
    <location>
        <begin position="311"/>
        <end position="331"/>
    </location>
</feature>
<feature type="transmembrane region" description="Helical" evidence="1">
    <location>
        <begin position="346"/>
        <end position="366"/>
    </location>
</feature>
<feature type="transmembrane region" description="Helical" evidence="1">
    <location>
        <begin position="378"/>
        <end position="398"/>
    </location>
</feature>
<feature type="transmembrane region" description="Helical" evidence="1">
    <location>
        <begin position="408"/>
        <end position="428"/>
    </location>
</feature>
<evidence type="ECO:0000255" key="1">
    <source>
        <dbReference type="HAMAP-Rule" id="MF_01165"/>
    </source>
</evidence>
<dbReference type="EC" id="2.4.2.43" evidence="1"/>
<dbReference type="EMBL" id="CP000462">
    <property type="protein sequence ID" value="ABK37038.1"/>
    <property type="molecule type" value="Genomic_DNA"/>
</dbReference>
<dbReference type="RefSeq" id="WP_011704923.1">
    <property type="nucleotide sequence ID" value="NC_008570.1"/>
</dbReference>
<dbReference type="RefSeq" id="YP_855534.1">
    <property type="nucleotide sequence ID" value="NC_008570.1"/>
</dbReference>
<dbReference type="SMR" id="A0KGY4"/>
<dbReference type="STRING" id="380703.AHA_0988"/>
<dbReference type="CAZy" id="GT83">
    <property type="family name" value="Glycosyltransferase Family 83"/>
</dbReference>
<dbReference type="EnsemblBacteria" id="ABK37038">
    <property type="protein sequence ID" value="ABK37038"/>
    <property type="gene ID" value="AHA_0988"/>
</dbReference>
<dbReference type="GeneID" id="4487529"/>
<dbReference type="KEGG" id="aha:AHA_0988"/>
<dbReference type="PATRIC" id="fig|380703.7.peg.992"/>
<dbReference type="eggNOG" id="COG1807">
    <property type="taxonomic scope" value="Bacteria"/>
</dbReference>
<dbReference type="HOGENOM" id="CLU_019200_2_1_6"/>
<dbReference type="OrthoDB" id="9775035at2"/>
<dbReference type="UniPathway" id="UPA00037"/>
<dbReference type="Proteomes" id="UP000000756">
    <property type="component" value="Chromosome"/>
</dbReference>
<dbReference type="GO" id="GO:0005886">
    <property type="term" value="C:plasma membrane"/>
    <property type="evidence" value="ECO:0007669"/>
    <property type="project" value="UniProtKB-SubCell"/>
</dbReference>
<dbReference type="GO" id="GO:0103015">
    <property type="term" value="F:4-amino-4-deoxy-L-arabinose transferase activity"/>
    <property type="evidence" value="ECO:0007669"/>
    <property type="project" value="UniProtKB-EC"/>
</dbReference>
<dbReference type="GO" id="GO:0000030">
    <property type="term" value="F:mannosyltransferase activity"/>
    <property type="evidence" value="ECO:0007669"/>
    <property type="project" value="InterPro"/>
</dbReference>
<dbReference type="GO" id="GO:0009245">
    <property type="term" value="P:lipid A biosynthetic process"/>
    <property type="evidence" value="ECO:0007669"/>
    <property type="project" value="UniProtKB-UniRule"/>
</dbReference>
<dbReference type="GO" id="GO:0009103">
    <property type="term" value="P:lipopolysaccharide biosynthetic process"/>
    <property type="evidence" value="ECO:0007669"/>
    <property type="project" value="UniProtKB-KW"/>
</dbReference>
<dbReference type="GO" id="GO:0006493">
    <property type="term" value="P:protein O-linked glycosylation"/>
    <property type="evidence" value="ECO:0007669"/>
    <property type="project" value="InterPro"/>
</dbReference>
<dbReference type="GO" id="GO:0010041">
    <property type="term" value="P:response to iron(III) ion"/>
    <property type="evidence" value="ECO:0007669"/>
    <property type="project" value="TreeGrafter"/>
</dbReference>
<dbReference type="HAMAP" id="MF_01165">
    <property type="entry name" value="ArnT_transfer"/>
    <property type="match status" value="1"/>
</dbReference>
<dbReference type="InterPro" id="IPR022839">
    <property type="entry name" value="ArnT_tfrase"/>
</dbReference>
<dbReference type="InterPro" id="IPR003342">
    <property type="entry name" value="Glyco_trans_39/83"/>
</dbReference>
<dbReference type="InterPro" id="IPR050297">
    <property type="entry name" value="LipidA_mod_glycosyltrf_83"/>
</dbReference>
<dbReference type="NCBIfam" id="NF009784">
    <property type="entry name" value="PRK13279.1"/>
    <property type="match status" value="1"/>
</dbReference>
<dbReference type="PANTHER" id="PTHR33908">
    <property type="entry name" value="MANNOSYLTRANSFERASE YKCB-RELATED"/>
    <property type="match status" value="1"/>
</dbReference>
<dbReference type="PANTHER" id="PTHR33908:SF3">
    <property type="entry name" value="UNDECAPRENYL PHOSPHATE-ALPHA-4-AMINO-4-DEOXY-L-ARABINOSE ARABINOSYL TRANSFERASE"/>
    <property type="match status" value="1"/>
</dbReference>
<dbReference type="Pfam" id="PF02366">
    <property type="entry name" value="PMT"/>
    <property type="match status" value="1"/>
</dbReference>
<proteinExistence type="inferred from homology"/>
<keyword id="KW-0997">Cell inner membrane</keyword>
<keyword id="KW-1003">Cell membrane</keyword>
<keyword id="KW-0328">Glycosyltransferase</keyword>
<keyword id="KW-0441">Lipid A biosynthesis</keyword>
<keyword id="KW-0444">Lipid biosynthesis</keyword>
<keyword id="KW-0443">Lipid metabolism</keyword>
<keyword id="KW-0448">Lipopolysaccharide biosynthesis</keyword>
<keyword id="KW-0472">Membrane</keyword>
<keyword id="KW-1185">Reference proteome</keyword>
<keyword id="KW-0808">Transferase</keyword>
<keyword id="KW-0812">Transmembrane</keyword>
<keyword id="KW-1133">Transmembrane helix</keyword>
<organism>
    <name type="scientific">Aeromonas hydrophila subsp. hydrophila (strain ATCC 7966 / DSM 30187 / BCRC 13018 / CCUG 14551 / JCM 1027 / KCTC 2358 / NCIMB 9240 / NCTC 8049)</name>
    <dbReference type="NCBI Taxonomy" id="380703"/>
    <lineage>
        <taxon>Bacteria</taxon>
        <taxon>Pseudomonadati</taxon>
        <taxon>Pseudomonadota</taxon>
        <taxon>Gammaproteobacteria</taxon>
        <taxon>Aeromonadales</taxon>
        <taxon>Aeromonadaceae</taxon>
        <taxon>Aeromonas</taxon>
    </lineage>
</organism>